<evidence type="ECO:0000269" key="1">
    <source>
    </source>
</evidence>
<evidence type="ECO:0000269" key="2">
    <source>
    </source>
</evidence>
<evidence type="ECO:0000269" key="3">
    <source>
    </source>
</evidence>
<evidence type="ECO:0000305" key="4"/>
<evidence type="ECO:0000305" key="5">
    <source>
    </source>
</evidence>
<evidence type="ECO:0007829" key="6">
    <source>
        <dbReference type="PDB" id="1VPR"/>
    </source>
</evidence>
<organism>
    <name type="scientific">Lingulodinium polyedra</name>
    <name type="common">Dinoflagellate</name>
    <name type="synonym">Gonyaulax polyedra</name>
    <dbReference type="NCBI Taxonomy" id="160621"/>
    <lineage>
        <taxon>Eukaryota</taxon>
        <taxon>Sar</taxon>
        <taxon>Alveolata</taxon>
        <taxon>Dinophyceae</taxon>
        <taxon>Gonyaulacales</taxon>
        <taxon>Lingulodiniaceae</taxon>
        <taxon>Lingulodinium</taxon>
    </lineage>
</organism>
<proteinExistence type="evidence at protein level"/>
<sequence length="1241" mass="136889">MAAQLEQFLVNEGQVDQRAVTYMLKGLQLESLSDFASFWTSKDYENGVRDDIISKVAPFNSDLSLPAAKLQVARLRAAWRKAQGKPSAAVPLQSAKPVAGSVVTATKDTGFCEKTGLESGGVAHGGALNAAQVAHLDEDAFKGGLHRPKFDSEGLHKPHTSGGKTYETGFHYLLEAHELGGKNADGGFGGPLCADPFSPEIEQLCQALVREAQDDKTLCFENFTKPCPQLTKKQVELCKGFDYGDKTLKLPCGPLPWPAGLPEPGYVPKTNPLHGRWITVSGGQAAFIKEAIKAGMLGAAESHKIMADTDHHQTGGMYLRINQNGDVCTVDASVAKFARAKRTWKSGHYFYEPLVSGGNLLGVWVLPEEYRKIGFFWEMESGRCFRIERRAFERNGLMIMRQATEVAGKISFVFYVKVSNDPESKPIPLQSRDYTALAGLDNVPDSLGNPYTCEAKDLDYPIKRDTWLDKNQEEMLKQRSIVGTAFAKCCDQGFEAHDNPKGGALTAAHVESLGKENFKNGLHAPNFHDDGLHKPMEAGGKVYSTGFHYLLEAHDLGGKNEDGGYGGPLCKDPYGKEVQSMVENLLVQANVDTTNAFDNFKQPCPQLTKEQVAMCKGFDYGDKTLKLPCGPLPWPAGLPEPGYVPKTNPLHGRWITVSGGQVAFIKEAIKSGMLGAAEAKKIIADTDHHQTGGMYLRINQYGEVCTVDASVAKFARAKRTWKSGHYFYEPLVSGGNLLGVWVLPEEYRKIGFFWEMESGHCFRIERRAFPCGPYMFLRQATEVGGKISYVFYVKVSNDPGSKPIPLQSRDYTALAGQDNAPDNLGKPYKCTARDLDAPTKRDGWLDTNKGAMLDQREKVSKAFAKVCEKGFEAGDNKLGGALNAKHVEKYGDNFKNGMHKPEFHEDGLHKPMEVGGKKFESGFHYLLECHELGGKNASGGYGGPLCEDPYGSEVQAMTEKLLKEADSDRTLCFNNFQDPCPQLTKEQVAMCKGFDYGDKTLKLPCGPLPWPAGLPEPGYVPKTNPLHGRWITVSGGQAAFIKEAIKSGMLGAAEANKIVADTDHHQTGGMYLRINQFGDVCTVDASVAKFARAKRTWKSGHYFYEPLVSGGNLLGVWVLPEEYRKIGFFWEMESGRCFRIERRAFPVGPYTFMRQATEVGGKISFVFYVKVSNDPESDPIPLQSRDYTALAGRDNAPTNLGKPYPTLAKDLDYPKKRDGWLEKNEKEMLRQRNIVSSTFRS</sequence>
<accession>O77206</accession>
<accession>Q39912</accession>
<protein>
    <recommendedName>
        <fullName>Dinoflagellate luciferase</fullName>
        <ecNumber>1.13.12.18</ecNumber>
    </recommendedName>
</protein>
<comment type="function">
    <text evidence="1 2 3">Emits blue light flashes with a wavelength of 475 nm during the night phase.</text>
</comment>
<comment type="catalytic activity">
    <reaction evidence="2">
        <text>dinoflagellate luciferin + O2 = oxidized dinoflagellate luciferin + hnu + H2O + H(+)</text>
        <dbReference type="Rhea" id="RHEA:28775"/>
        <dbReference type="ChEBI" id="CHEBI:15377"/>
        <dbReference type="ChEBI" id="CHEBI:15378"/>
        <dbReference type="ChEBI" id="CHEBI:15379"/>
        <dbReference type="ChEBI" id="CHEBI:30212"/>
        <dbReference type="ChEBI" id="CHEBI:61708"/>
        <dbReference type="ChEBI" id="CHEBI:61796"/>
        <dbReference type="EC" id="1.13.12.18"/>
    </reaction>
</comment>
<comment type="activity regulation">
    <text evidence="1">Regulated by pH: upon acidification, at a pH of 6.3, dinoflagellate luciferin is released from luciferin-binding protein LBP, allowing the interaction between Dinoflagellate luciferase and its substrate luciferin.</text>
</comment>
<comment type="subcellular location">
    <subcellularLocation>
        <location evidence="1">Cytoplasmic vesicle</location>
    </subcellularLocation>
    <text>Localizes in scintillons, specialized organelles formed as outpocketings from the cytoplasm into the acidic vacuole.</text>
</comment>
<comment type="domain">
    <text evidence="1">Composed of 3 homologous Luciferase domains: each of the individual domains are most active at pH 6.3, and there is very little activity at pH 8.0.</text>
</comment>
<comment type="miscellaneous">
    <text evidence="5">Dinoflagellate luciferase mediates much of the bioluminescence in ocean surface waters.</text>
</comment>
<comment type="similarity">
    <text evidence="4">Belongs to the calycin superfamily. Luciferase family.</text>
</comment>
<feature type="chain" id="PRO_0000418501" description="Dinoflagellate luciferase">
    <location>
        <begin position="1"/>
        <end position="1241"/>
    </location>
</feature>
<feature type="region of interest" description="Luciferase 1">
    <location>
        <begin position="114"/>
        <end position="465"/>
    </location>
</feature>
<feature type="region of interest" description="Luciferase 2">
    <location>
        <begin position="491"/>
        <end position="842"/>
    </location>
</feature>
<feature type="region of interest" description="Luciferase 3">
    <location>
        <begin position="868"/>
        <end position="1218"/>
    </location>
</feature>
<feature type="sequence conflict" description="In Ref. 2; AAA68491." evidence="4" ref="2">
    <original>LL</original>
    <variation>QH</variation>
    <location>
        <begin position="737"/>
        <end position="738"/>
    </location>
</feature>
<feature type="sequence conflict" description="In Ref. 2; AAA68491." evidence="4" ref="2">
    <original>MESGH</original>
    <variation>ILRPA</variation>
    <location>
        <begin position="756"/>
        <end position="760"/>
    </location>
</feature>
<feature type="sequence conflict" description="In Ref. 2; AAA68491." evidence="4" ref="2">
    <original>RRA</original>
    <variation>PAR</variation>
    <location>
        <begin position="766"/>
        <end position="768"/>
    </location>
</feature>
<feature type="sequence conflict" description="In Ref. 2; AAA68491." evidence="4" ref="2">
    <original>M</original>
    <variation>I</variation>
    <location>
        <position position="1228"/>
    </location>
</feature>
<feature type="strand" evidence="6">
    <location>
        <begin position="871"/>
        <end position="873"/>
    </location>
</feature>
<feature type="strand" evidence="6">
    <location>
        <begin position="877"/>
        <end position="881"/>
    </location>
</feature>
<feature type="turn" evidence="6">
    <location>
        <begin position="884"/>
        <end position="887"/>
    </location>
</feature>
<feature type="helix" evidence="6">
    <location>
        <begin position="888"/>
        <end position="893"/>
    </location>
</feature>
<feature type="strand" evidence="6">
    <location>
        <begin position="912"/>
        <end position="914"/>
    </location>
</feature>
<feature type="strand" evidence="6">
    <location>
        <begin position="917"/>
        <end position="920"/>
    </location>
</feature>
<feature type="helix" evidence="6">
    <location>
        <begin position="922"/>
        <end position="930"/>
    </location>
</feature>
<feature type="helix" evidence="6">
    <location>
        <begin position="952"/>
        <end position="965"/>
    </location>
</feature>
<feature type="helix" evidence="6">
    <location>
        <begin position="972"/>
        <end position="976"/>
    </location>
</feature>
<feature type="helix" evidence="6">
    <location>
        <begin position="985"/>
        <end position="991"/>
    </location>
</feature>
<feature type="strand" evidence="6">
    <location>
        <begin position="1028"/>
        <end position="1036"/>
    </location>
</feature>
<feature type="helix" evidence="6">
    <location>
        <begin position="1037"/>
        <end position="1046"/>
    </location>
</feature>
<feature type="helix" evidence="6">
    <location>
        <begin position="1052"/>
        <end position="1062"/>
    </location>
</feature>
<feature type="helix" evidence="6">
    <location>
        <begin position="1064"/>
        <end position="1066"/>
    </location>
</feature>
<feature type="strand" evidence="6">
    <location>
        <begin position="1070"/>
        <end position="1077"/>
    </location>
</feature>
<feature type="strand" evidence="6">
    <location>
        <begin position="1080"/>
        <end position="1084"/>
    </location>
</feature>
<feature type="turn" evidence="6">
    <location>
        <begin position="1087"/>
        <end position="1089"/>
    </location>
</feature>
<feature type="strand" evidence="6">
    <location>
        <begin position="1090"/>
        <end position="1098"/>
    </location>
</feature>
<feature type="strand" evidence="6">
    <location>
        <begin position="1102"/>
        <end position="1107"/>
    </location>
</feature>
<feature type="strand" evidence="6">
    <location>
        <begin position="1112"/>
        <end position="1118"/>
    </location>
</feature>
<feature type="strand" evidence="6">
    <location>
        <begin position="1121"/>
        <end position="1131"/>
    </location>
</feature>
<feature type="turn" evidence="6">
    <location>
        <begin position="1132"/>
        <end position="1134"/>
    </location>
</feature>
<feature type="strand" evidence="6">
    <location>
        <begin position="1136"/>
        <end position="1147"/>
    </location>
</feature>
<feature type="strand" evidence="6">
    <location>
        <begin position="1150"/>
        <end position="1159"/>
    </location>
</feature>
<feature type="strand" evidence="6">
    <location>
        <begin position="1162"/>
        <end position="1173"/>
    </location>
</feature>
<feature type="helix" evidence="6">
    <location>
        <begin position="1186"/>
        <end position="1189"/>
    </location>
</feature>
<feature type="turn" evidence="6">
    <location>
        <begin position="1190"/>
        <end position="1192"/>
    </location>
</feature>
<feature type="turn" evidence="6">
    <location>
        <begin position="1211"/>
        <end position="1214"/>
    </location>
</feature>
<name>LUCIF_LINPO</name>
<dbReference type="EC" id="1.13.12.18"/>
<dbReference type="EMBL" id="AF085332">
    <property type="protein sequence ID" value="AAC36472.1"/>
    <property type="molecule type" value="mRNA"/>
</dbReference>
<dbReference type="EMBL" id="L04648">
    <property type="protein sequence ID" value="AAA68491.1"/>
    <property type="molecule type" value="mRNA"/>
</dbReference>
<dbReference type="PIR" id="S50144">
    <property type="entry name" value="S50144"/>
</dbReference>
<dbReference type="PDB" id="1VPR">
    <property type="method" value="X-ray"/>
    <property type="resolution" value="1.80 A"/>
    <property type="chains" value="A=866-1239"/>
</dbReference>
<dbReference type="PDBsum" id="1VPR"/>
<dbReference type="SMR" id="O77206"/>
<dbReference type="KEGG" id="ag:AAC36472"/>
<dbReference type="BioCyc" id="MetaCyc:MONOMER-20284"/>
<dbReference type="BRENDA" id="1.13.12.18">
    <property type="organism ID" value="2492"/>
</dbReference>
<dbReference type="EvolutionaryTrace" id="O77206"/>
<dbReference type="GO" id="GO:0031410">
    <property type="term" value="C:cytoplasmic vesicle"/>
    <property type="evidence" value="ECO:0007669"/>
    <property type="project" value="UniProtKB-KW"/>
</dbReference>
<dbReference type="GO" id="GO:0045289">
    <property type="term" value="F:luciferin monooxygenase activity"/>
    <property type="evidence" value="ECO:0000314"/>
    <property type="project" value="UniProtKB"/>
</dbReference>
<dbReference type="GO" id="GO:0016703">
    <property type="term" value="F:oxidoreductase activity, acting on single donors with incorporation of molecular oxygen, incorporation of one atom of oxygen (internal monooxygenases or internal mixed function oxidases)"/>
    <property type="evidence" value="ECO:0000314"/>
    <property type="project" value="UniProtKB"/>
</dbReference>
<dbReference type="GO" id="GO:0008218">
    <property type="term" value="P:bioluminescence"/>
    <property type="evidence" value="ECO:0000314"/>
    <property type="project" value="UniProtKB"/>
</dbReference>
<dbReference type="FunFam" id="2.40.128.20:FF:000036">
    <property type="entry name" value="Luciferase"/>
    <property type="match status" value="2"/>
</dbReference>
<dbReference type="Gene3D" id="2.40.128.20">
    <property type="match status" value="3"/>
</dbReference>
<dbReference type="Gene3D" id="4.10.1300.10">
    <property type="entry name" value="Dinoflagellate luciferase"/>
    <property type="match status" value="3"/>
</dbReference>
<dbReference type="Gene3D" id="4.10.1310.10">
    <property type="entry name" value="Dinoflagellate luciferase repeat"/>
    <property type="match status" value="3"/>
</dbReference>
<dbReference type="InterPro" id="IPR012674">
    <property type="entry name" value="Calycin"/>
</dbReference>
<dbReference type="InterPro" id="IPR007959">
    <property type="entry name" value="Dino_Luciferase_N"/>
</dbReference>
<dbReference type="InterPro" id="IPR044902">
    <property type="entry name" value="Dino_Luciferase_rpt_sf"/>
</dbReference>
<dbReference type="InterPro" id="IPR018804">
    <property type="entry name" value="Luciferase_cat"/>
</dbReference>
<dbReference type="InterPro" id="IPR044903">
    <property type="entry name" value="Luciferase_hlx-bundle_dom_sf"/>
</dbReference>
<dbReference type="InterPro" id="IPR018475">
    <property type="entry name" value="Luciferase_hlx-bundle_domain"/>
</dbReference>
<dbReference type="Pfam" id="PF10284">
    <property type="entry name" value="Luciferase_3H"/>
    <property type="match status" value="3"/>
</dbReference>
<dbReference type="Pfam" id="PF10285">
    <property type="entry name" value="Luciferase_cat"/>
    <property type="match status" value="3"/>
</dbReference>
<dbReference type="Pfam" id="PF05295">
    <property type="entry name" value="Luciferase_N"/>
    <property type="match status" value="1"/>
</dbReference>
<dbReference type="SUPFAM" id="SSF50814">
    <property type="entry name" value="Lipocalins"/>
    <property type="match status" value="3"/>
</dbReference>
<keyword id="KW-0002">3D-structure</keyword>
<keyword id="KW-0968">Cytoplasmic vesicle</keyword>
<keyword id="KW-0903">Direct protein sequencing</keyword>
<keyword id="KW-0455">Luminescence</keyword>
<keyword id="KW-0560">Oxidoreductase</keyword>
<reference key="1">
    <citation type="journal article" date="1997" name="Proc. Natl. Acad. Sci. U.S.A.">
        <title>Three functional luciferase domains in a single polypeptide chain.</title>
        <authorList>
            <person name="Li L."/>
            <person name="Hong R."/>
            <person name="Hastings J.W."/>
        </authorList>
    </citation>
    <scope>NUCLEOTIDE SEQUENCE [MRNA]</scope>
    <scope>PROTEIN SEQUENCE OF 115-140 AND 373-383</scope>
    <source>
        <strain>GP70</strain>
    </source>
</reference>
<reference key="2">
    <citation type="journal article" date="1994" name="Biochim. Biophys. Acta">
        <title>Cloning, sequencing and expression of dinoflagellate luciferase DNA from a marine alga, Gonyaulax polyedra.</title>
        <authorList>
            <person name="Bae Y.M."/>
            <person name="Hastings J.W."/>
        </authorList>
    </citation>
    <scope>NUCLEOTIDE SEQUENCE [MRNA] OF 600-1241</scope>
    <scope>FUNCTION</scope>
    <source>
        <strain>GP70</strain>
    </source>
</reference>
<reference key="3">
    <citation type="journal article" date="1981" name="J. Biol. Chem.">
        <title>The biological clock in Gonyaulax controls luciferase activity by regulating turnover.</title>
        <authorList>
            <person name="Dunlap J.C."/>
            <person name="Hastings J.W."/>
        </authorList>
    </citation>
    <scope>FUNCTION</scope>
    <scope>CATALYTIC ACTIVITY</scope>
</reference>
<reference key="4">
    <citation type="journal article" date="2005" name="Proc. Natl. Acad. Sci. U.S.A.">
        <title>Crystal structure of a pH-regulated luciferase catalyzing the bioluminescent oxidation of an open tetrapyrrole.</title>
        <authorList>
            <person name="Schultz L.W."/>
            <person name="Liu L."/>
            <person name="Cegielski M."/>
            <person name="Hastings J.W."/>
        </authorList>
    </citation>
    <scope>X-RAY CRYSTALLOGRAPHY (1.80 ANGSTROMS) OF 866-1239</scope>
    <scope>FUNCTION</scope>
    <scope>SUBCELLULAR LOCATION</scope>
    <scope>ACTIVITY REGULATION</scope>
    <scope>DOMAIN</scope>
</reference>